<dbReference type="EMBL" id="CP000770">
    <property type="protein sequence ID" value="ABS30615.1"/>
    <property type="molecule type" value="Genomic_DNA"/>
</dbReference>
<dbReference type="SMR" id="A8Z664"/>
<dbReference type="STRING" id="444179.SMGWSS_218"/>
<dbReference type="KEGG" id="smg:SMGWSS_218"/>
<dbReference type="HOGENOM" id="CLU_104295_1_2_10"/>
<dbReference type="Proteomes" id="UP000000781">
    <property type="component" value="Chromosome"/>
</dbReference>
<dbReference type="GO" id="GO:0015935">
    <property type="term" value="C:small ribosomal subunit"/>
    <property type="evidence" value="ECO:0007669"/>
    <property type="project" value="InterPro"/>
</dbReference>
<dbReference type="GO" id="GO:0019843">
    <property type="term" value="F:rRNA binding"/>
    <property type="evidence" value="ECO:0007669"/>
    <property type="project" value="UniProtKB-UniRule"/>
</dbReference>
<dbReference type="GO" id="GO:0003735">
    <property type="term" value="F:structural constituent of ribosome"/>
    <property type="evidence" value="ECO:0007669"/>
    <property type="project" value="InterPro"/>
</dbReference>
<dbReference type="GO" id="GO:0000049">
    <property type="term" value="F:tRNA binding"/>
    <property type="evidence" value="ECO:0007669"/>
    <property type="project" value="UniProtKB-UniRule"/>
</dbReference>
<dbReference type="GO" id="GO:0006412">
    <property type="term" value="P:translation"/>
    <property type="evidence" value="ECO:0007669"/>
    <property type="project" value="UniProtKB-UniRule"/>
</dbReference>
<dbReference type="CDD" id="cd03368">
    <property type="entry name" value="Ribosomal_S12"/>
    <property type="match status" value="1"/>
</dbReference>
<dbReference type="FunFam" id="2.40.50.140:FF:000001">
    <property type="entry name" value="30S ribosomal protein S12"/>
    <property type="match status" value="1"/>
</dbReference>
<dbReference type="Gene3D" id="2.40.50.140">
    <property type="entry name" value="Nucleic acid-binding proteins"/>
    <property type="match status" value="1"/>
</dbReference>
<dbReference type="HAMAP" id="MF_00403_B">
    <property type="entry name" value="Ribosomal_uS12_B"/>
    <property type="match status" value="1"/>
</dbReference>
<dbReference type="InterPro" id="IPR012340">
    <property type="entry name" value="NA-bd_OB-fold"/>
</dbReference>
<dbReference type="InterPro" id="IPR006032">
    <property type="entry name" value="Ribosomal_uS12"/>
</dbReference>
<dbReference type="InterPro" id="IPR005679">
    <property type="entry name" value="Ribosomal_uS12_bac"/>
</dbReference>
<dbReference type="NCBIfam" id="TIGR00981">
    <property type="entry name" value="rpsL_bact"/>
    <property type="match status" value="1"/>
</dbReference>
<dbReference type="PANTHER" id="PTHR11652">
    <property type="entry name" value="30S RIBOSOMAL PROTEIN S12 FAMILY MEMBER"/>
    <property type="match status" value="1"/>
</dbReference>
<dbReference type="Pfam" id="PF00164">
    <property type="entry name" value="Ribosom_S12_S23"/>
    <property type="match status" value="1"/>
</dbReference>
<dbReference type="PIRSF" id="PIRSF002133">
    <property type="entry name" value="Ribosomal_S12/S23"/>
    <property type="match status" value="1"/>
</dbReference>
<dbReference type="PRINTS" id="PR01034">
    <property type="entry name" value="RIBOSOMALS12"/>
</dbReference>
<dbReference type="SUPFAM" id="SSF50249">
    <property type="entry name" value="Nucleic acid-binding proteins"/>
    <property type="match status" value="1"/>
</dbReference>
<dbReference type="PROSITE" id="PS00055">
    <property type="entry name" value="RIBOSOMAL_S12"/>
    <property type="match status" value="1"/>
</dbReference>
<evidence type="ECO:0000250" key="1"/>
<evidence type="ECO:0000255" key="2">
    <source>
        <dbReference type="HAMAP-Rule" id="MF_00403"/>
    </source>
</evidence>
<evidence type="ECO:0000305" key="3"/>
<keyword id="KW-0488">Methylation</keyword>
<keyword id="KW-0687">Ribonucleoprotein</keyword>
<keyword id="KW-0689">Ribosomal protein</keyword>
<keyword id="KW-0694">RNA-binding</keyword>
<keyword id="KW-0699">rRNA-binding</keyword>
<keyword id="KW-0820">tRNA-binding</keyword>
<comment type="function">
    <text evidence="2">With S4 and S5 plays an important role in translational accuracy.</text>
</comment>
<comment type="function">
    <text evidence="2">Interacts with and stabilizes bases of the 16S rRNA that are involved in tRNA selection in the A site and with the mRNA backbone. Located at the interface of the 30S and 50S subunits, it traverses the body of the 30S subunit contacting proteins on the other side and probably holding the rRNA structure together. The combined cluster of proteins S8, S12 and S17 appears to hold together the shoulder and platform of the 30S subunit.</text>
</comment>
<comment type="subunit">
    <text evidence="2">Part of the 30S ribosomal subunit. Contacts proteins S8 and S17. May interact with IF1 in the 30S initiation complex.</text>
</comment>
<comment type="similarity">
    <text evidence="2">Belongs to the universal ribosomal protein uS12 family.</text>
</comment>
<reference key="1">
    <citation type="journal article" date="2007" name="Proc. Natl. Acad. Sci. U.S.A.">
        <title>Parallel genomic evolution and metabolic interdependence in an ancient symbiosis.</title>
        <authorList>
            <person name="McCutcheon J.P."/>
            <person name="Moran N.A."/>
        </authorList>
    </citation>
    <scope>NUCLEOTIDE SEQUENCE [LARGE SCALE GENOMIC DNA]</scope>
    <source>
        <strain>GWSS</strain>
    </source>
</reference>
<accession>A8Z664</accession>
<protein>
    <recommendedName>
        <fullName evidence="2">Small ribosomal subunit protein uS12</fullName>
    </recommendedName>
    <alternativeName>
        <fullName evidence="3">30S ribosomal protein S12</fullName>
    </alternativeName>
</protein>
<gene>
    <name evidence="2" type="primary">rpsL</name>
    <name type="ordered locus">SMGWSS_218</name>
</gene>
<proteinExistence type="inferred from homology"/>
<feature type="chain" id="PRO_1000080422" description="Small ribosomal subunit protein uS12">
    <location>
        <begin position="1"/>
        <end position="131"/>
    </location>
</feature>
<feature type="modified residue" description="3-methylthioaspartic acid" evidence="1">
    <location>
        <position position="89"/>
    </location>
</feature>
<sequence>MPTIQQLVRKGRKNIKKKSKSMALNCCPQRKGVCTRVYTTTPKKPNSAMRKVARVRLTNGKEVNAYIPGEGHNLQEHSIVLIRGGRVKDLPGVRYHIIRGALDTAGVKDRKKARSKYGAKCSKKINKINKK</sequence>
<organism>
    <name type="scientific">Karelsulcia muelleri (strain GWSS)</name>
    <name type="common">Sulcia muelleri</name>
    <dbReference type="NCBI Taxonomy" id="444179"/>
    <lineage>
        <taxon>Bacteria</taxon>
        <taxon>Pseudomonadati</taxon>
        <taxon>Bacteroidota</taxon>
        <taxon>Flavobacteriia</taxon>
        <taxon>Flavobacteriales</taxon>
        <taxon>Candidatus Karelsulcia</taxon>
    </lineage>
</organism>
<name>RS12_KARMG</name>